<protein>
    <recommendedName>
        <fullName evidence="15">ABC transporter D family member 1</fullName>
        <shortName evidence="15">ABC transporter ABCD.1</shortName>
        <shortName evidence="15">AtABCD1</shortName>
        <ecNumber>7.6.2.4</ecNumber>
    </recommendedName>
    <alternativeName>
        <fullName>Peroxisomal ABC transporter 1</fullName>
        <shortName>AtPXA1</shortName>
    </alternativeName>
    <alternativeName>
        <fullName>Protein ACETATE NON-UTILIZING 2</fullName>
    </alternativeName>
    <alternativeName>
        <fullName>Protein COMATOSE</fullName>
    </alternativeName>
    <alternativeName>
        <fullName>Protein PEROXISOME DEFECTIVE 3</fullName>
        <shortName>Ped3p</shortName>
    </alternativeName>
</protein>
<feature type="chain" id="PRO_0000379135" description="ABC transporter D family member 1">
    <location>
        <begin position="1"/>
        <end position="1337"/>
    </location>
</feature>
<feature type="transmembrane region" description="Helical" evidence="3">
    <location>
        <begin position="24"/>
        <end position="44"/>
    </location>
</feature>
<feature type="transmembrane region" description="Helical" evidence="3">
    <location>
        <begin position="142"/>
        <end position="162"/>
    </location>
</feature>
<feature type="transmembrane region" description="Helical" evidence="3">
    <location>
        <begin position="247"/>
        <end position="267"/>
    </location>
</feature>
<feature type="transmembrane region" description="Helical" evidence="3">
    <location>
        <begin position="342"/>
        <end position="362"/>
    </location>
</feature>
<feature type="transmembrane region" description="Helical" evidence="3">
    <location>
        <begin position="900"/>
        <end position="920"/>
    </location>
</feature>
<feature type="domain" description="ABC transmembrane type-1 1" evidence="3">
    <location>
        <begin position="117"/>
        <end position="395"/>
    </location>
</feature>
<feature type="domain" description="ABC transporter 1" evidence="2">
    <location>
        <begin position="448"/>
        <end position="695"/>
    </location>
</feature>
<feature type="domain" description="ABC transmembrane type-1 2" evidence="3">
    <location>
        <begin position="751"/>
        <end position="1049"/>
    </location>
</feature>
<feature type="domain" description="ABC transporter 2" evidence="2">
    <location>
        <begin position="1091"/>
        <end position="1337"/>
    </location>
</feature>
<feature type="binding site" evidence="2">
    <location>
        <begin position="481"/>
        <end position="488"/>
    </location>
    <ligand>
        <name>ATP</name>
        <dbReference type="ChEBI" id="CHEBI:30616"/>
    </ligand>
</feature>
<feature type="binding site" evidence="2">
    <location>
        <begin position="1130"/>
        <end position="1137"/>
    </location>
    <ligand>
        <name>ATP</name>
        <dbReference type="ChEBI" id="CHEBI:30616"/>
    </ligand>
</feature>
<feature type="mutagenesis site" description="In ped3-4; Normal germination, but impaired seedling, roots and leaves growth." evidence="7">
    <original>S</original>
    <variation>N</variation>
    <location>
        <position position="810"/>
    </location>
</feature>
<feature type="mutagenesis site" description="In ped3-2; Normal germination, but impaired seedling, roots and leaves growth." evidence="7">
    <original>R</original>
    <variation>W</variation>
    <location>
        <position position="1035"/>
    </location>
</feature>
<feature type="sequence conflict" description="In Ref. 3; BAB84551/BAB84550." evidence="16" ref="3">
    <original>T</original>
    <variation>A</variation>
    <location>
        <position position="64"/>
    </location>
</feature>
<organism>
    <name type="scientific">Arabidopsis thaliana</name>
    <name type="common">Mouse-ear cress</name>
    <dbReference type="NCBI Taxonomy" id="3702"/>
    <lineage>
        <taxon>Eukaryota</taxon>
        <taxon>Viridiplantae</taxon>
        <taxon>Streptophyta</taxon>
        <taxon>Embryophyta</taxon>
        <taxon>Tracheophyta</taxon>
        <taxon>Spermatophyta</taxon>
        <taxon>Magnoliopsida</taxon>
        <taxon>eudicotyledons</taxon>
        <taxon>Gunneridae</taxon>
        <taxon>Pentapetalae</taxon>
        <taxon>rosids</taxon>
        <taxon>malvids</taxon>
        <taxon>Brassicales</taxon>
        <taxon>Brassicaceae</taxon>
        <taxon>Camelineae</taxon>
        <taxon>Arabidopsis</taxon>
    </lineage>
</organism>
<sequence>MPSLQLLQLTERGRGLVASRRKSILLAAGIVAAGGTAVYLKSRVASRRPDSSRLCNGQSDDDETLEKLTATDQNAKITTKKKKGGGLKSLQVLTAILLSQMGKMGARDLLALVATVVFRTALSNRLAKVQGFLFRAAFLRRAPLFLRLISENIMLCFMLSTLHSTSKYITGALSLRFRKILTKIIHSHYFENMVYYKISHVDGRITHPEQRIASDVPRFSSELSDLILDDLTAVTDGILYAWRLCSYASPKYIFWILAYVLGAGTAIRNFSPSFGKLMSKEQQLEGEYRQLHSRLRTHSESIAFYGGETREESHIQQKFKNLVSHMSHVLHDHWWFGMIQDFLLKYLGATVAVILIIEPFFSGHLRPDDSTLGRAEMLSNIRYHTSVIISLFQALGTLSISSRRLNRLSGYADRIHELMAVSRELSGDDKSSFQRNRSRNYLSEANYVEFSDVKVVTPTGNVLVEDLTLRVEQGSNLLITGPNGSGKSSLFRVLGGLWPLVSGHIVKPGVGSDLNKEIFYVPQRPYMAVGTLRDQLIYPLTSGQESELLTEIGMVELLKNVDLEYLLDRYQPEKEVNWGDELSLGEQQRLGMARLFYHKPKFAILDECTSAVTTDMEERFAAKVRAMGTSCITISHRPALVAFHDVVLSLDGEGGWSVHYKRDDSALLTDAEIDSVKSSDTDRQNDAMVVQRAFAAARKESATNSKAQSYQTQLIARSPVVDKSVVLPRFPQPQTSQRALPSRVAAMLNVLIPTIFDKQGAQLLAVACLVVSRTLISDRIASLNGTTVKYVLEQDKAAFVRLIGLSVLQSGASSIIAPSLRHLTQRLALGWRIRLTQHLLRNYLRNNAFYKVFHMSGNSIDADQRLTRDLEKLTADLSGLLTGMVKPSVDILWFTWRMKLLTGQRGVAILYTYMLLGLGFLRRVAPDFGDLAGEEQQLEGKFRFMHERLNTHAESIAFFGGGAREKAMVDKKFRALLDHSLMLLRKKWLYGILDDFVTKQLPNNVTWGLSLLYALEHKGDRALVSTQGELAHALRYLASVVSQSFMAFGDILELHKKFLELSGGINRIFELDEFLDASQSGVTSENQTSRLDSQDLLSFSEVDIITPAQKLMASKLSCEIVSGKSLLVTGPNGSGKTSVFRVLRDIWPTVCGRLTKPSLDIKELGSGNGMFFVPQRPYTCLGTLRDQIIYPLSKEEAEKRAAKLYTSGESSTEAGSILDSHLKTILENVRLVYLLERDVGGWDATTNWEDILSLGEQQRLGMARLFFHRPKFGVLDECTNATSVDVEEQLYRVARDMGVTFITSSQRPALIPFHSLELRLIDGEGNWELRSIEQTTE</sequence>
<evidence type="ECO:0000255" key="1"/>
<evidence type="ECO:0000255" key="2">
    <source>
        <dbReference type="PROSITE-ProRule" id="PRU00434"/>
    </source>
</evidence>
<evidence type="ECO:0000255" key="3">
    <source>
        <dbReference type="PROSITE-ProRule" id="PRU00441"/>
    </source>
</evidence>
<evidence type="ECO:0000269" key="4">
    <source>
    </source>
</evidence>
<evidence type="ECO:0000269" key="5">
    <source>
    </source>
</evidence>
<evidence type="ECO:0000269" key="6">
    <source>
    </source>
</evidence>
<evidence type="ECO:0000269" key="7">
    <source>
    </source>
</evidence>
<evidence type="ECO:0000269" key="8">
    <source>
    </source>
</evidence>
<evidence type="ECO:0000269" key="9">
    <source>
    </source>
</evidence>
<evidence type="ECO:0000269" key="10">
    <source>
    </source>
</evidence>
<evidence type="ECO:0000269" key="11">
    <source>
    </source>
</evidence>
<evidence type="ECO:0000269" key="12">
    <source>
    </source>
</evidence>
<evidence type="ECO:0000269" key="13">
    <source>
    </source>
</evidence>
<evidence type="ECO:0000269" key="14">
    <source>
    </source>
</evidence>
<evidence type="ECO:0000303" key="15">
    <source>
    </source>
</evidence>
<evidence type="ECO:0000305" key="16"/>
<comment type="function">
    <text evidence="4 5 6 7 8 9 10 11 12 13 14">Contributes to the transport of fatty acids and their derivatives (acyl CoAs) across the peroxisomal membrane. Provides acetate to the glyoxylate cycle in developing seedlings. Involved in pollen tube elongation, ovule fertilization, and seeds germination after imbibition (controls the switch between the opposing developmental programs of dormancy and germination), probably by promoting beta-oxidation of storage lipids during gluconeogenesis. Required for biosynthesis of jasmonic acid and conversion of indole butyric acid to indole acetic acid. Confers sensitivity to monofluoroacetic acid (FAc), a toxic acetate analog, and to 2,4-dichlorophenoxybutyric acid (2,4-DB) and indole-3-butyric acid (IBA), two precursors of auxin after beta-oxidation.</text>
</comment>
<comment type="catalytic activity">
    <reaction>
        <text>an acyl-CoA(out) + ATP + H2O = an acyl-CoA(in) + ADP + phosphate + H(+)</text>
        <dbReference type="Rhea" id="RHEA:15181"/>
        <dbReference type="ChEBI" id="CHEBI:15377"/>
        <dbReference type="ChEBI" id="CHEBI:15378"/>
        <dbReference type="ChEBI" id="CHEBI:30616"/>
        <dbReference type="ChEBI" id="CHEBI:43474"/>
        <dbReference type="ChEBI" id="CHEBI:58342"/>
        <dbReference type="ChEBI" id="CHEBI:456216"/>
        <dbReference type="EC" id="7.6.2.4"/>
    </reaction>
</comment>
<comment type="interaction">
    <interactant intactId="EBI-7933055">
        <id>Q94FB9</id>
    </interactant>
    <interactant intactId="EBI-1151789">
        <id>Q9SRQ3</id>
        <label>PEX19-1</label>
    </interactant>
    <organismsDiffer>false</organismsDiffer>
    <experiments>2</experiments>
</comment>
<comment type="interaction">
    <interactant intactId="EBI-7933055">
        <id>Q94FB9</id>
    </interactant>
    <interactant intactId="EBI-7933092">
        <id>Q94EI3</id>
        <label>PEX19-2</label>
    </interactant>
    <organismsDiffer>false</organismsDiffer>
    <experiments>2</experiments>
</comment>
<comment type="subcellular location">
    <subcellularLocation>
        <location evidence="8">Peroxisome membrane</location>
        <topology evidence="1">Multi-pass membrane protein</topology>
    </subcellularLocation>
    <subcellularLocation>
        <location evidence="7">Glyoxysome membrane</location>
        <topology evidence="1">Multi-pass membrane protein</topology>
    </subcellularLocation>
</comment>
<comment type="alternative products">
    <event type="alternative splicing"/>
    <isoform>
        <id>Q94FB9-1</id>
        <name>1</name>
        <sequence type="displayed"/>
    </isoform>
    <text>A number of isoforms are produced. According to EST sequences.</text>
</comment>
<comment type="developmental stage">
    <text evidence="7 8">Levels increase transiently after germination, before and during radicle emergence, especially in darkness (at protein level).</text>
</comment>
<comment type="disruption phenotype">
    <text evidence="4 6 7 8 9 10 11 12 13 14">Impaired germination after imbibition, rescued by sucrose treatment. Resistance to FAc, IBA and 2,4-DB. Compromised ability to convert acetate into soluble carbohydrate. Defective in lipid mobilization and accumulate acyl CoAs. Poor initiation of lateral root formation and smaller rosettes with fewer leaves than in wild-type. Crinkled and waxy leaves.</text>
</comment>
<comment type="similarity">
    <text evidence="16">Belongs to the ABC transporter superfamily. ABCD family. Peroxisomal fatty acyl CoA transporter (TC 3.A.1.203) subfamily.</text>
</comment>
<comment type="sequence caution" evidence="16">
    <conflict type="erroneous gene model prediction">
        <sequence resource="EMBL-CDS" id="CAB38898"/>
    </conflict>
</comment>
<comment type="sequence caution" evidence="16">
    <conflict type="erroneous gene model prediction">
        <sequence resource="EMBL-CDS" id="CAB80648"/>
    </conflict>
</comment>
<proteinExistence type="evidence at protein level"/>
<reference key="1">
    <citation type="journal article" date="2001" name="Plant Physiol.">
        <title>The Arabidopsis pxa1 mutant is defective in an ATP-binding cassette transporter-like protein required for peroxisomal fatty acid beta-oxidation.</title>
        <authorList>
            <person name="Zolman B.K."/>
            <person name="Silva I.D."/>
            <person name="Bartel B."/>
        </authorList>
    </citation>
    <scope>NUCLEOTIDE SEQUENCE [MRNA]</scope>
    <scope>FUNCTION</scope>
    <scope>DISRUPTION PHENOTYPE</scope>
    <source>
        <strain>cv. Columbia</strain>
    </source>
</reference>
<reference key="2">
    <citation type="journal article" date="2002" name="EMBO J.">
        <title>Control of germination and lipid mobilization by COMATOSE, the Arabidopsis homologue of human ALDP.</title>
        <authorList>
            <person name="Footitt S."/>
            <person name="Slocombe S.P."/>
            <person name="Larner V."/>
            <person name="Kurup S."/>
            <person name="Wu Y."/>
            <person name="Larson T."/>
            <person name="Graham I."/>
            <person name="Baker A."/>
            <person name="Holdsworth M."/>
        </authorList>
    </citation>
    <scope>NUCLEOTIDE SEQUENCE [GENOMIC DNA]</scope>
    <scope>FUNCTION</scope>
    <scope>DISRUPTION PHENOTYPE</scope>
    <scope>DEVELOPMENTAL STAGE</scope>
    <scope>SUBCELLULAR LOCATION</scope>
    <source>
        <strain>cv. Columbia</strain>
    </source>
</reference>
<reference key="3">
    <citation type="journal article" date="2002" name="Plant Cell Physiol.">
        <title>Ped3p is a peroxisomal ATP-binding cassette transporter that might supply substrates for fatty acid beta-oxidation.</title>
        <authorList>
            <person name="Hayashi M."/>
            <person name="Nito K."/>
            <person name="Takei-Hoshi R."/>
            <person name="Yagi M."/>
            <person name="Kondo M."/>
            <person name="Suenaga A."/>
            <person name="Yamaya T."/>
            <person name="Nishimura M."/>
        </authorList>
    </citation>
    <scope>NUCLEOTIDE SEQUENCE [GENOMIC DNA / MRNA]</scope>
    <scope>MUTAGENESIS OF SER-810 AND ARG-1035</scope>
    <scope>FUNCTION</scope>
    <scope>DEVELOPMENTAL STAGE</scope>
    <scope>SUBCELLULAR LOCATION</scope>
    <scope>DISRUPTION PHENOTYPE</scope>
</reference>
<reference key="4">
    <citation type="journal article" date="1999" name="Nature">
        <title>Sequence and analysis of chromosome 4 of the plant Arabidopsis thaliana.</title>
        <authorList>
            <person name="Mayer K.F.X."/>
            <person name="Schueller C."/>
            <person name="Wambutt R."/>
            <person name="Murphy G."/>
            <person name="Volckaert G."/>
            <person name="Pohl T."/>
            <person name="Duesterhoeft A."/>
            <person name="Stiekema W."/>
            <person name="Entian K.-D."/>
            <person name="Terryn N."/>
            <person name="Harris B."/>
            <person name="Ansorge W."/>
            <person name="Brandt P."/>
            <person name="Grivell L.A."/>
            <person name="Rieger M."/>
            <person name="Weichselgartner M."/>
            <person name="de Simone V."/>
            <person name="Obermaier B."/>
            <person name="Mache R."/>
            <person name="Mueller M."/>
            <person name="Kreis M."/>
            <person name="Delseny M."/>
            <person name="Puigdomenech P."/>
            <person name="Watson M."/>
            <person name="Schmidtheini T."/>
            <person name="Reichert B."/>
            <person name="Portetelle D."/>
            <person name="Perez-Alonso M."/>
            <person name="Boutry M."/>
            <person name="Bancroft I."/>
            <person name="Vos P."/>
            <person name="Hoheisel J."/>
            <person name="Zimmermann W."/>
            <person name="Wedler H."/>
            <person name="Ridley P."/>
            <person name="Langham S.-A."/>
            <person name="McCullagh B."/>
            <person name="Bilham L."/>
            <person name="Robben J."/>
            <person name="van der Schueren J."/>
            <person name="Grymonprez B."/>
            <person name="Chuang Y.-J."/>
            <person name="Vandenbussche F."/>
            <person name="Braeken M."/>
            <person name="Weltjens I."/>
            <person name="Voet M."/>
            <person name="Bastiaens I."/>
            <person name="Aert R."/>
            <person name="Defoor E."/>
            <person name="Weitzenegger T."/>
            <person name="Bothe G."/>
            <person name="Ramsperger U."/>
            <person name="Hilbert H."/>
            <person name="Braun M."/>
            <person name="Holzer E."/>
            <person name="Brandt A."/>
            <person name="Peters S."/>
            <person name="van Staveren M."/>
            <person name="Dirkse W."/>
            <person name="Mooijman P."/>
            <person name="Klein Lankhorst R."/>
            <person name="Rose M."/>
            <person name="Hauf J."/>
            <person name="Koetter P."/>
            <person name="Berneiser S."/>
            <person name="Hempel S."/>
            <person name="Feldpausch M."/>
            <person name="Lamberth S."/>
            <person name="Van den Daele H."/>
            <person name="De Keyser A."/>
            <person name="Buysshaert C."/>
            <person name="Gielen J."/>
            <person name="Villarroel R."/>
            <person name="De Clercq R."/>
            <person name="van Montagu M."/>
            <person name="Rogers J."/>
            <person name="Cronin A."/>
            <person name="Quail M.A."/>
            <person name="Bray-Allen S."/>
            <person name="Clark L."/>
            <person name="Doggett J."/>
            <person name="Hall S."/>
            <person name="Kay M."/>
            <person name="Lennard N."/>
            <person name="McLay K."/>
            <person name="Mayes R."/>
            <person name="Pettett A."/>
            <person name="Rajandream M.A."/>
            <person name="Lyne M."/>
            <person name="Benes V."/>
            <person name="Rechmann S."/>
            <person name="Borkova D."/>
            <person name="Bloecker H."/>
            <person name="Scharfe M."/>
            <person name="Grimm M."/>
            <person name="Loehnert T.-H."/>
            <person name="Dose S."/>
            <person name="de Haan M."/>
            <person name="Maarse A.C."/>
            <person name="Schaefer M."/>
            <person name="Mueller-Auer S."/>
            <person name="Gabel C."/>
            <person name="Fuchs M."/>
            <person name="Fartmann B."/>
            <person name="Granderath K."/>
            <person name="Dauner D."/>
            <person name="Herzl A."/>
            <person name="Neumann S."/>
            <person name="Argiriou A."/>
            <person name="Vitale D."/>
            <person name="Liguori R."/>
            <person name="Piravandi E."/>
            <person name="Massenet O."/>
            <person name="Quigley F."/>
            <person name="Clabauld G."/>
            <person name="Muendlein A."/>
            <person name="Felber R."/>
            <person name="Schnabl S."/>
            <person name="Hiller R."/>
            <person name="Schmidt W."/>
            <person name="Lecharny A."/>
            <person name="Aubourg S."/>
            <person name="Chefdor F."/>
            <person name="Cooke R."/>
            <person name="Berger C."/>
            <person name="Monfort A."/>
            <person name="Casacuberta E."/>
            <person name="Gibbons T."/>
            <person name="Weber N."/>
            <person name="Vandenbol M."/>
            <person name="Bargues M."/>
            <person name="Terol J."/>
            <person name="Torres A."/>
            <person name="Perez-Perez A."/>
            <person name="Purnelle B."/>
            <person name="Bent E."/>
            <person name="Johnson S."/>
            <person name="Tacon D."/>
            <person name="Jesse T."/>
            <person name="Heijnen L."/>
            <person name="Schwarz S."/>
            <person name="Scholler P."/>
            <person name="Heber S."/>
            <person name="Francs P."/>
            <person name="Bielke C."/>
            <person name="Frishman D."/>
            <person name="Haase D."/>
            <person name="Lemcke K."/>
            <person name="Mewes H.-W."/>
            <person name="Stocker S."/>
            <person name="Zaccaria P."/>
            <person name="Bevan M."/>
            <person name="Wilson R.K."/>
            <person name="de la Bastide M."/>
            <person name="Habermann K."/>
            <person name="Parnell L."/>
            <person name="Dedhia N."/>
            <person name="Gnoj L."/>
            <person name="Schutz K."/>
            <person name="Huang E."/>
            <person name="Spiegel L."/>
            <person name="Sekhon M."/>
            <person name="Murray J."/>
            <person name="Sheet P."/>
            <person name="Cordes M."/>
            <person name="Abu-Threideh J."/>
            <person name="Stoneking T."/>
            <person name="Kalicki J."/>
            <person name="Graves T."/>
            <person name="Harmon G."/>
            <person name="Edwards J."/>
            <person name="Latreille P."/>
            <person name="Courtney L."/>
            <person name="Cloud J."/>
            <person name="Abbott A."/>
            <person name="Scott K."/>
            <person name="Johnson D."/>
            <person name="Minx P."/>
            <person name="Bentley D."/>
            <person name="Fulton B."/>
            <person name="Miller N."/>
            <person name="Greco T."/>
            <person name="Kemp K."/>
            <person name="Kramer J."/>
            <person name="Fulton L."/>
            <person name="Mardis E."/>
            <person name="Dante M."/>
            <person name="Pepin K."/>
            <person name="Hillier L.W."/>
            <person name="Nelson J."/>
            <person name="Spieth J."/>
            <person name="Ryan E."/>
            <person name="Andrews S."/>
            <person name="Geisel C."/>
            <person name="Layman D."/>
            <person name="Du H."/>
            <person name="Ali J."/>
            <person name="Berghoff A."/>
            <person name="Jones K."/>
            <person name="Drone K."/>
            <person name="Cotton M."/>
            <person name="Joshu C."/>
            <person name="Antonoiu B."/>
            <person name="Zidanic M."/>
            <person name="Strong C."/>
            <person name="Sun H."/>
            <person name="Lamar B."/>
            <person name="Yordan C."/>
            <person name="Ma P."/>
            <person name="Zhong J."/>
            <person name="Preston R."/>
            <person name="Vil D."/>
            <person name="Shekher M."/>
            <person name="Matero A."/>
            <person name="Shah R."/>
            <person name="Swaby I.K."/>
            <person name="O'Shaughnessy A."/>
            <person name="Rodriguez M."/>
            <person name="Hoffman J."/>
            <person name="Till S."/>
            <person name="Granat S."/>
            <person name="Shohdy N."/>
            <person name="Hasegawa A."/>
            <person name="Hameed A."/>
            <person name="Lodhi M."/>
            <person name="Johnson A."/>
            <person name="Chen E."/>
            <person name="Marra M.A."/>
            <person name="Martienssen R."/>
            <person name="McCombie W.R."/>
        </authorList>
    </citation>
    <scope>NUCLEOTIDE SEQUENCE [LARGE SCALE GENOMIC DNA]</scope>
    <source>
        <strain>cv. Columbia</strain>
    </source>
</reference>
<reference key="5">
    <citation type="journal article" date="2017" name="Plant J.">
        <title>Araport11: a complete reannotation of the Arabidopsis thaliana reference genome.</title>
        <authorList>
            <person name="Cheng C.Y."/>
            <person name="Krishnakumar V."/>
            <person name="Chan A.P."/>
            <person name="Thibaud-Nissen F."/>
            <person name="Schobel S."/>
            <person name="Town C.D."/>
        </authorList>
    </citation>
    <scope>GENOME REANNOTATION</scope>
    <source>
        <strain>cv. Columbia</strain>
    </source>
</reference>
<reference key="6">
    <citation type="journal article" date="2001" name="J. Biol. Chem.">
        <title>The Arabidopsis thaliana ABC protein superfamily, a complete inventory.</title>
        <authorList>
            <person name="Sanchez-Fernandez R."/>
            <person name="Davies T.G."/>
            <person name="Coleman J.O."/>
            <person name="Rea P.A."/>
        </authorList>
    </citation>
    <scope>GENE FAMILY</scope>
    <scope>NOMENCLATURE</scope>
</reference>
<reference key="7">
    <citation type="journal article" date="2002" name="Planta">
        <title>Multifunctionality of plant ABC transporters -- more than just detoxifiers.</title>
        <authorList>
            <person name="Martinoia E."/>
            <person name="Klein M."/>
            <person name="Geisler M."/>
            <person name="Bovet L."/>
            <person name="Forestier C."/>
            <person name="Kolukisaoglu H.U."/>
            <person name="Mueller-Roeber B."/>
            <person name="Schulz B."/>
        </authorList>
    </citation>
    <scope>GENE FAMILY</scope>
</reference>
<reference key="8">
    <citation type="journal article" date="1998" name="Plant Cell">
        <title>2,4-Dichlorophenoxybutyric acid-resistant mutants of Arabidopsis have defects in glyoxysomal fatty acid beta-oxidation.</title>
        <authorList>
            <person name="Hayashi M."/>
            <person name="Toriyama K."/>
            <person name="Kondo M."/>
            <person name="Nishimura M."/>
        </authorList>
    </citation>
    <scope>FUNCTION</scope>
    <scope>DISRUPTION PHENOTYPE</scope>
</reference>
<reference key="9">
    <citation type="journal article" date="2000" name="Development">
        <title>The Arabidopsis COMATOSE locus regulates germination potential.</title>
        <authorList>
            <person name="Russell L."/>
            <person name="Larner V."/>
            <person name="Kurup S."/>
            <person name="Bougourd S."/>
            <person name="Holdsworth M."/>
        </authorList>
    </citation>
    <scope>FUNCTION</scope>
    <scope>DISRUPTION PHENOTYPE</scope>
</reference>
<reference key="10">
    <citation type="journal article" date="2000" name="Genetics">
        <title>Genetic analysis of indole-3-butyric acid responses in Arabidopsis thaliana reveals four mutant classes.</title>
        <authorList>
            <person name="Zolman B.K."/>
            <person name="Yoder A."/>
            <person name="Bartel B."/>
        </authorList>
    </citation>
    <scope>FUNCTION</scope>
</reference>
<reference key="11">
    <citation type="journal article" date="2004" name="Mol. Genet. Genomics">
        <title>Acetate non-utilizing mutants of Arabidopsis: evidence that organic acids influence carbohydrate perception in germinating seedlings.</title>
        <authorList>
            <person name="Hooks M.A."/>
            <person name="Turner J.E."/>
            <person name="Murphy E.C."/>
            <person name="Graham I.A."/>
        </authorList>
    </citation>
    <scope>FUNCTION</scope>
    <scope>DISRUPTION PHENOTYPE</scope>
</reference>
<reference key="12">
    <citation type="journal article" date="2006" name="J. Exp. Bot.">
        <title>Analysis of the role of COMATOSE and peroxisomal beta-oxidation in the determination of germination potential in Arabidopsis.</title>
        <authorList>
            <person name="Footitt S."/>
            <person name="Marquez J."/>
            <person name="Schmuths H."/>
            <person name="Baker A."/>
            <person name="Theodoulou F.L."/>
            <person name="Holdsworth M."/>
        </authorList>
    </citation>
    <scope>FUNCTION</scope>
    <scope>DISRUPTION PHENOTYPE</scope>
</reference>
<reference key="13">
    <citation type="journal article" date="2007" name="Plant Physiol.">
        <title>The COMATOSE ATP-binding cassette transporter is required for full fertility in Arabidopsis.</title>
        <authorList>
            <person name="Footitt S."/>
            <person name="Dietrich D."/>
            <person name="Fait A."/>
            <person name="Fernie A.R."/>
            <person name="Holdsworth M.J."/>
            <person name="Baker A."/>
            <person name="Theodoulou F.L."/>
        </authorList>
    </citation>
    <scope>FUNCTION</scope>
    <scope>DISRUPTION PHENOTYPE</scope>
</reference>
<reference key="14">
    <citation type="journal article" date="2007" name="Plant Physiol.">
        <title>Gene expression profiling reveals defined functions of the ATP-binding cassette transporter COMATOSE late in phase II of germination.</title>
        <authorList>
            <person name="Carrera E."/>
            <person name="Holman T."/>
            <person name="Medhurst A."/>
            <person name="Peer W."/>
            <person name="Schmuths H."/>
            <person name="Footitt S."/>
            <person name="Theodoulou F.L."/>
            <person name="Holdsworth M.J."/>
        </authorList>
    </citation>
    <scope>FUNCTION</scope>
    <scope>DISRUPTION PHENOTYPE</scope>
</reference>
<reference key="15">
    <citation type="journal article" date="2007" name="Biochem. J.">
        <title>The Arabidopsis ALDP protein homologue COMATOSE is instrumental in peroxisomal acetate metabolism.</title>
        <authorList>
            <person name="Hooks M.A."/>
            <person name="Turner J.E."/>
            <person name="Murphy E.C."/>
            <person name="Johnston K.A."/>
            <person name="Burr S."/>
            <person name="Jaroslawski S."/>
        </authorList>
    </citation>
    <scope>FUNCTION</scope>
    <scope>DISRUPTION PHENOTYPE</scope>
</reference>
<reference key="16">
    <citation type="journal article" date="2008" name="Trends Plant Sci.">
        <title>Plant ABC proteins - a unified nomenclature and updated inventory.</title>
        <authorList>
            <person name="Verrier P.J."/>
            <person name="Bird D."/>
            <person name="Burla B."/>
            <person name="Dassa E."/>
            <person name="Forestier C."/>
            <person name="Geisler M."/>
            <person name="Klein M."/>
            <person name="Kolukisaoglu H.U."/>
            <person name="Lee Y."/>
            <person name="Martinoia E."/>
            <person name="Murphy A."/>
            <person name="Rea P.A."/>
            <person name="Samuels L."/>
            <person name="Schulz B."/>
            <person name="Spalding E.J."/>
            <person name="Yazaki K."/>
            <person name="Theodoulou F.L."/>
        </authorList>
    </citation>
    <scope>GENE FAMILY</scope>
    <scope>NOMENCLATURE</scope>
</reference>
<name>AB1D_ARATH</name>
<dbReference type="EC" id="7.6.2.4"/>
<dbReference type="EMBL" id="AF378120">
    <property type="protein sequence ID" value="AAK95343.1"/>
    <property type="molecule type" value="mRNA"/>
</dbReference>
<dbReference type="EMBL" id="AJ311341">
    <property type="protein sequence ID" value="CAC85290.1"/>
    <property type="molecule type" value="Genomic_DNA"/>
</dbReference>
<dbReference type="EMBL" id="AB070615">
    <property type="protein sequence ID" value="BAB84550.1"/>
    <property type="molecule type" value="Genomic_DNA"/>
</dbReference>
<dbReference type="EMBL" id="AB070616">
    <property type="protein sequence ID" value="BAB84551.1"/>
    <property type="molecule type" value="mRNA"/>
</dbReference>
<dbReference type="EMBL" id="AL035708">
    <property type="protein sequence ID" value="CAB38898.1"/>
    <property type="status" value="ALT_SEQ"/>
    <property type="molecule type" value="Genomic_DNA"/>
</dbReference>
<dbReference type="EMBL" id="AL161596">
    <property type="protein sequence ID" value="CAB80648.1"/>
    <property type="status" value="ALT_SEQ"/>
    <property type="molecule type" value="Genomic_DNA"/>
</dbReference>
<dbReference type="EMBL" id="CP002687">
    <property type="protein sequence ID" value="AEE87126.1"/>
    <property type="molecule type" value="Genomic_DNA"/>
</dbReference>
<dbReference type="EMBL" id="CP002687">
    <property type="protein sequence ID" value="ANM66328.1"/>
    <property type="molecule type" value="Genomic_DNA"/>
</dbReference>
<dbReference type="PIR" id="T06091">
    <property type="entry name" value="T06091"/>
</dbReference>
<dbReference type="RefSeq" id="NP_001328232.1">
    <molecule id="Q94FB9-1"/>
    <property type="nucleotide sequence ID" value="NM_001342558.1"/>
</dbReference>
<dbReference type="RefSeq" id="NP_568072.1">
    <molecule id="Q94FB9-1"/>
    <property type="nucleotide sequence ID" value="NM_120148.3"/>
</dbReference>
<dbReference type="SMR" id="Q94FB9"/>
<dbReference type="BioGRID" id="15424">
    <property type="interactions" value="7"/>
</dbReference>
<dbReference type="FunCoup" id="Q94FB9">
    <property type="interactions" value="1427"/>
</dbReference>
<dbReference type="IntAct" id="Q94FB9">
    <property type="interactions" value="3"/>
</dbReference>
<dbReference type="MINT" id="Q94FB9"/>
<dbReference type="STRING" id="3702.Q94FB9"/>
<dbReference type="TCDB" id="3.A.1.203.5">
    <property type="family name" value="the atp-binding cassette (abc) superfamily"/>
</dbReference>
<dbReference type="iPTMnet" id="Q94FB9"/>
<dbReference type="PaxDb" id="3702-AT4G39850.3"/>
<dbReference type="ProteomicsDB" id="245130">
    <molecule id="Q94FB9-1"/>
</dbReference>
<dbReference type="EnsemblPlants" id="AT4G39850.1">
    <molecule id="Q94FB9-1"/>
    <property type="protein sequence ID" value="AT4G39850.1"/>
    <property type="gene ID" value="AT4G39850"/>
</dbReference>
<dbReference type="EnsemblPlants" id="AT4G39850.4">
    <molecule id="Q94FB9-1"/>
    <property type="protein sequence ID" value="AT4G39850.4"/>
    <property type="gene ID" value="AT4G39850"/>
</dbReference>
<dbReference type="GeneID" id="830144"/>
<dbReference type="Gramene" id="AT4G39850.1">
    <molecule id="Q94FB9-1"/>
    <property type="protein sequence ID" value="AT4G39850.1"/>
    <property type="gene ID" value="AT4G39850"/>
</dbReference>
<dbReference type="Gramene" id="AT4G39850.4">
    <molecule id="Q94FB9-1"/>
    <property type="protein sequence ID" value="AT4G39850.4"/>
    <property type="gene ID" value="AT4G39850"/>
</dbReference>
<dbReference type="KEGG" id="ath:AT4G39850"/>
<dbReference type="Araport" id="AT4G39850"/>
<dbReference type="TAIR" id="AT4G39850">
    <property type="gene designation" value="ABCD1"/>
</dbReference>
<dbReference type="eggNOG" id="KOG0060">
    <property type="taxonomic scope" value="Eukaryota"/>
</dbReference>
<dbReference type="eggNOG" id="KOG0064">
    <property type="taxonomic scope" value="Eukaryota"/>
</dbReference>
<dbReference type="InParanoid" id="Q94FB9"/>
<dbReference type="OMA" id="MEIEHTE"/>
<dbReference type="PhylomeDB" id="Q94FB9"/>
<dbReference type="BioCyc" id="ARA:AT4G39850-MONOMER"/>
<dbReference type="BRENDA" id="7.6.2.4">
    <property type="organism ID" value="399"/>
</dbReference>
<dbReference type="PRO" id="PR:Q94FB9"/>
<dbReference type="Proteomes" id="UP000006548">
    <property type="component" value="Chromosome 4"/>
</dbReference>
<dbReference type="ExpressionAtlas" id="Q94FB9">
    <property type="expression patterns" value="baseline and differential"/>
</dbReference>
<dbReference type="GO" id="GO:0046861">
    <property type="term" value="C:glyoxysomal membrane"/>
    <property type="evidence" value="ECO:0007669"/>
    <property type="project" value="UniProtKB-SubCell"/>
</dbReference>
<dbReference type="GO" id="GO:0015607">
    <property type="term" value="F:ABC-type fatty-acyl-CoA transporter activity"/>
    <property type="evidence" value="ECO:0007669"/>
    <property type="project" value="UniProtKB-EC"/>
</dbReference>
<dbReference type="GO" id="GO:0005524">
    <property type="term" value="F:ATP binding"/>
    <property type="evidence" value="ECO:0007669"/>
    <property type="project" value="UniProtKB-KW"/>
</dbReference>
<dbReference type="GO" id="GO:0016887">
    <property type="term" value="F:ATP hydrolysis activity"/>
    <property type="evidence" value="ECO:0007669"/>
    <property type="project" value="InterPro"/>
</dbReference>
<dbReference type="GO" id="GO:0016042">
    <property type="term" value="P:lipid catabolic process"/>
    <property type="evidence" value="ECO:0000315"/>
    <property type="project" value="CACAO"/>
</dbReference>
<dbReference type="CDD" id="cd03223">
    <property type="entry name" value="ABCD_peroxisomal_ALDP"/>
    <property type="match status" value="2"/>
</dbReference>
<dbReference type="FunFam" id="1.20.1560.10:FF:000173">
    <property type="entry name" value="Peroxisomal ABC transporter 1"/>
    <property type="match status" value="1"/>
</dbReference>
<dbReference type="FunFam" id="3.40.50.300:FF:002680">
    <property type="entry name" value="Peroxisomal ABC transporter 1"/>
    <property type="match status" value="1"/>
</dbReference>
<dbReference type="Gene3D" id="1.20.1560.10">
    <property type="entry name" value="ABC transporter type 1, transmembrane domain"/>
    <property type="match status" value="1"/>
</dbReference>
<dbReference type="Gene3D" id="3.40.50.300">
    <property type="entry name" value="P-loop containing nucleotide triphosphate hydrolases"/>
    <property type="match status" value="2"/>
</dbReference>
<dbReference type="InterPro" id="IPR003593">
    <property type="entry name" value="AAA+_ATPase"/>
</dbReference>
<dbReference type="InterPro" id="IPR011527">
    <property type="entry name" value="ABC1_TM_dom"/>
</dbReference>
<dbReference type="InterPro" id="IPR036640">
    <property type="entry name" value="ABC1_TM_sf"/>
</dbReference>
<dbReference type="InterPro" id="IPR003439">
    <property type="entry name" value="ABC_transporter-like_ATP-bd"/>
</dbReference>
<dbReference type="InterPro" id="IPR017871">
    <property type="entry name" value="ABC_transporter-like_CS"/>
</dbReference>
<dbReference type="InterPro" id="IPR050835">
    <property type="entry name" value="ABC_transporter_sub-D"/>
</dbReference>
<dbReference type="InterPro" id="IPR027417">
    <property type="entry name" value="P-loop_NTPase"/>
</dbReference>
<dbReference type="PANTHER" id="PTHR11384:SF56">
    <property type="entry name" value="ABC TRANSPORTER D FAMILY MEMBER 1"/>
    <property type="match status" value="1"/>
</dbReference>
<dbReference type="PANTHER" id="PTHR11384">
    <property type="entry name" value="ATP-BINDING CASSETTE, SUB-FAMILY D MEMBER"/>
    <property type="match status" value="1"/>
</dbReference>
<dbReference type="Pfam" id="PF06472">
    <property type="entry name" value="ABC_membrane_2"/>
    <property type="match status" value="2"/>
</dbReference>
<dbReference type="Pfam" id="PF00005">
    <property type="entry name" value="ABC_tran"/>
    <property type="match status" value="2"/>
</dbReference>
<dbReference type="SMART" id="SM00382">
    <property type="entry name" value="AAA"/>
    <property type="match status" value="2"/>
</dbReference>
<dbReference type="SUPFAM" id="SSF90123">
    <property type="entry name" value="ABC transporter transmembrane region"/>
    <property type="match status" value="2"/>
</dbReference>
<dbReference type="SUPFAM" id="SSF52540">
    <property type="entry name" value="P-loop containing nucleoside triphosphate hydrolases"/>
    <property type="match status" value="2"/>
</dbReference>
<dbReference type="PROSITE" id="PS50929">
    <property type="entry name" value="ABC_TM1F"/>
    <property type="match status" value="2"/>
</dbReference>
<dbReference type="PROSITE" id="PS00211">
    <property type="entry name" value="ABC_TRANSPORTER_1"/>
    <property type="match status" value="2"/>
</dbReference>
<dbReference type="PROSITE" id="PS50893">
    <property type="entry name" value="ABC_TRANSPORTER_2"/>
    <property type="match status" value="2"/>
</dbReference>
<keyword id="KW-0025">Alternative splicing</keyword>
<keyword id="KW-0067">ATP-binding</keyword>
<keyword id="KW-0330">Glyoxysome</keyword>
<keyword id="KW-0472">Membrane</keyword>
<keyword id="KW-0547">Nucleotide-binding</keyword>
<keyword id="KW-0576">Peroxisome</keyword>
<keyword id="KW-1185">Reference proteome</keyword>
<keyword id="KW-0677">Repeat</keyword>
<keyword id="KW-1278">Translocase</keyword>
<keyword id="KW-0812">Transmembrane</keyword>
<keyword id="KW-1133">Transmembrane helix</keyword>
<keyword id="KW-0813">Transport</keyword>
<accession>Q94FB9</accession>
<accession>Q8VWH7</accession>
<accession>Q9SMR8</accession>
<gene>
    <name evidence="15" type="primary">ABCD1</name>
    <name type="synonym">ACN2</name>
    <name type="synonym">CTS</name>
    <name type="synonym">PED3</name>
    <name type="synonym">PMP2</name>
    <name type="synonym">PXA1</name>
    <name type="ordered locus">At4g39850</name>
    <name type="ORF">T5J17.20</name>
</gene>